<reference key="1">
    <citation type="journal article" date="1999" name="Nature">
        <title>Sequence and analysis of chromosome 4 of the plant Arabidopsis thaliana.</title>
        <authorList>
            <person name="Mayer K.F.X."/>
            <person name="Schueller C."/>
            <person name="Wambutt R."/>
            <person name="Murphy G."/>
            <person name="Volckaert G."/>
            <person name="Pohl T."/>
            <person name="Duesterhoeft A."/>
            <person name="Stiekema W."/>
            <person name="Entian K.-D."/>
            <person name="Terryn N."/>
            <person name="Harris B."/>
            <person name="Ansorge W."/>
            <person name="Brandt P."/>
            <person name="Grivell L.A."/>
            <person name="Rieger M."/>
            <person name="Weichselgartner M."/>
            <person name="de Simone V."/>
            <person name="Obermaier B."/>
            <person name="Mache R."/>
            <person name="Mueller M."/>
            <person name="Kreis M."/>
            <person name="Delseny M."/>
            <person name="Puigdomenech P."/>
            <person name="Watson M."/>
            <person name="Schmidtheini T."/>
            <person name="Reichert B."/>
            <person name="Portetelle D."/>
            <person name="Perez-Alonso M."/>
            <person name="Boutry M."/>
            <person name="Bancroft I."/>
            <person name="Vos P."/>
            <person name="Hoheisel J."/>
            <person name="Zimmermann W."/>
            <person name="Wedler H."/>
            <person name="Ridley P."/>
            <person name="Langham S.-A."/>
            <person name="McCullagh B."/>
            <person name="Bilham L."/>
            <person name="Robben J."/>
            <person name="van der Schueren J."/>
            <person name="Grymonprez B."/>
            <person name="Chuang Y.-J."/>
            <person name="Vandenbussche F."/>
            <person name="Braeken M."/>
            <person name="Weltjens I."/>
            <person name="Voet M."/>
            <person name="Bastiaens I."/>
            <person name="Aert R."/>
            <person name="Defoor E."/>
            <person name="Weitzenegger T."/>
            <person name="Bothe G."/>
            <person name="Ramsperger U."/>
            <person name="Hilbert H."/>
            <person name="Braun M."/>
            <person name="Holzer E."/>
            <person name="Brandt A."/>
            <person name="Peters S."/>
            <person name="van Staveren M."/>
            <person name="Dirkse W."/>
            <person name="Mooijman P."/>
            <person name="Klein Lankhorst R."/>
            <person name="Rose M."/>
            <person name="Hauf J."/>
            <person name="Koetter P."/>
            <person name="Berneiser S."/>
            <person name="Hempel S."/>
            <person name="Feldpausch M."/>
            <person name="Lamberth S."/>
            <person name="Van den Daele H."/>
            <person name="De Keyser A."/>
            <person name="Buysshaert C."/>
            <person name="Gielen J."/>
            <person name="Villarroel R."/>
            <person name="De Clercq R."/>
            <person name="van Montagu M."/>
            <person name="Rogers J."/>
            <person name="Cronin A."/>
            <person name="Quail M.A."/>
            <person name="Bray-Allen S."/>
            <person name="Clark L."/>
            <person name="Doggett J."/>
            <person name="Hall S."/>
            <person name="Kay M."/>
            <person name="Lennard N."/>
            <person name="McLay K."/>
            <person name="Mayes R."/>
            <person name="Pettett A."/>
            <person name="Rajandream M.A."/>
            <person name="Lyne M."/>
            <person name="Benes V."/>
            <person name="Rechmann S."/>
            <person name="Borkova D."/>
            <person name="Bloecker H."/>
            <person name="Scharfe M."/>
            <person name="Grimm M."/>
            <person name="Loehnert T.-H."/>
            <person name="Dose S."/>
            <person name="de Haan M."/>
            <person name="Maarse A.C."/>
            <person name="Schaefer M."/>
            <person name="Mueller-Auer S."/>
            <person name="Gabel C."/>
            <person name="Fuchs M."/>
            <person name="Fartmann B."/>
            <person name="Granderath K."/>
            <person name="Dauner D."/>
            <person name="Herzl A."/>
            <person name="Neumann S."/>
            <person name="Argiriou A."/>
            <person name="Vitale D."/>
            <person name="Liguori R."/>
            <person name="Piravandi E."/>
            <person name="Massenet O."/>
            <person name="Quigley F."/>
            <person name="Clabauld G."/>
            <person name="Muendlein A."/>
            <person name="Felber R."/>
            <person name="Schnabl S."/>
            <person name="Hiller R."/>
            <person name="Schmidt W."/>
            <person name="Lecharny A."/>
            <person name="Aubourg S."/>
            <person name="Chefdor F."/>
            <person name="Cooke R."/>
            <person name="Berger C."/>
            <person name="Monfort A."/>
            <person name="Casacuberta E."/>
            <person name="Gibbons T."/>
            <person name="Weber N."/>
            <person name="Vandenbol M."/>
            <person name="Bargues M."/>
            <person name="Terol J."/>
            <person name="Torres A."/>
            <person name="Perez-Perez A."/>
            <person name="Purnelle B."/>
            <person name="Bent E."/>
            <person name="Johnson S."/>
            <person name="Tacon D."/>
            <person name="Jesse T."/>
            <person name="Heijnen L."/>
            <person name="Schwarz S."/>
            <person name="Scholler P."/>
            <person name="Heber S."/>
            <person name="Francs P."/>
            <person name="Bielke C."/>
            <person name="Frishman D."/>
            <person name="Haase D."/>
            <person name="Lemcke K."/>
            <person name="Mewes H.-W."/>
            <person name="Stocker S."/>
            <person name="Zaccaria P."/>
            <person name="Bevan M."/>
            <person name="Wilson R.K."/>
            <person name="de la Bastide M."/>
            <person name="Habermann K."/>
            <person name="Parnell L."/>
            <person name="Dedhia N."/>
            <person name="Gnoj L."/>
            <person name="Schutz K."/>
            <person name="Huang E."/>
            <person name="Spiegel L."/>
            <person name="Sekhon M."/>
            <person name="Murray J."/>
            <person name="Sheet P."/>
            <person name="Cordes M."/>
            <person name="Abu-Threideh J."/>
            <person name="Stoneking T."/>
            <person name="Kalicki J."/>
            <person name="Graves T."/>
            <person name="Harmon G."/>
            <person name="Edwards J."/>
            <person name="Latreille P."/>
            <person name="Courtney L."/>
            <person name="Cloud J."/>
            <person name="Abbott A."/>
            <person name="Scott K."/>
            <person name="Johnson D."/>
            <person name="Minx P."/>
            <person name="Bentley D."/>
            <person name="Fulton B."/>
            <person name="Miller N."/>
            <person name="Greco T."/>
            <person name="Kemp K."/>
            <person name="Kramer J."/>
            <person name="Fulton L."/>
            <person name="Mardis E."/>
            <person name="Dante M."/>
            <person name="Pepin K."/>
            <person name="Hillier L.W."/>
            <person name="Nelson J."/>
            <person name="Spieth J."/>
            <person name="Ryan E."/>
            <person name="Andrews S."/>
            <person name="Geisel C."/>
            <person name="Layman D."/>
            <person name="Du H."/>
            <person name="Ali J."/>
            <person name="Berghoff A."/>
            <person name="Jones K."/>
            <person name="Drone K."/>
            <person name="Cotton M."/>
            <person name="Joshu C."/>
            <person name="Antonoiu B."/>
            <person name="Zidanic M."/>
            <person name="Strong C."/>
            <person name="Sun H."/>
            <person name="Lamar B."/>
            <person name="Yordan C."/>
            <person name="Ma P."/>
            <person name="Zhong J."/>
            <person name="Preston R."/>
            <person name="Vil D."/>
            <person name="Shekher M."/>
            <person name="Matero A."/>
            <person name="Shah R."/>
            <person name="Swaby I.K."/>
            <person name="O'Shaughnessy A."/>
            <person name="Rodriguez M."/>
            <person name="Hoffman J."/>
            <person name="Till S."/>
            <person name="Granat S."/>
            <person name="Shohdy N."/>
            <person name="Hasegawa A."/>
            <person name="Hameed A."/>
            <person name="Lodhi M."/>
            <person name="Johnson A."/>
            <person name="Chen E."/>
            <person name="Marra M.A."/>
            <person name="Martienssen R."/>
            <person name="McCombie W.R."/>
        </authorList>
    </citation>
    <scope>NUCLEOTIDE SEQUENCE [LARGE SCALE GENOMIC DNA]</scope>
    <source>
        <strain>cv. Columbia</strain>
    </source>
</reference>
<reference key="2">
    <citation type="journal article" date="2017" name="Plant J.">
        <title>Araport11: a complete reannotation of the Arabidopsis thaliana reference genome.</title>
        <authorList>
            <person name="Cheng C.Y."/>
            <person name="Krishnakumar V."/>
            <person name="Chan A.P."/>
            <person name="Thibaud-Nissen F."/>
            <person name="Schobel S."/>
            <person name="Town C.D."/>
        </authorList>
    </citation>
    <scope>GENOME REANNOTATION</scope>
    <source>
        <strain>cv. Columbia</strain>
    </source>
</reference>
<reference key="3">
    <citation type="journal article" date="2003" name="Science">
        <title>Empirical analysis of transcriptional activity in the Arabidopsis genome.</title>
        <authorList>
            <person name="Yamada K."/>
            <person name="Lim J."/>
            <person name="Dale J.M."/>
            <person name="Chen H."/>
            <person name="Shinn P."/>
            <person name="Palm C.J."/>
            <person name="Southwick A.M."/>
            <person name="Wu H.C."/>
            <person name="Kim C.J."/>
            <person name="Nguyen M."/>
            <person name="Pham P.K."/>
            <person name="Cheuk R.F."/>
            <person name="Karlin-Newmann G."/>
            <person name="Liu S.X."/>
            <person name="Lam B."/>
            <person name="Sakano H."/>
            <person name="Wu T."/>
            <person name="Yu G."/>
            <person name="Miranda M."/>
            <person name="Quach H.L."/>
            <person name="Tripp M."/>
            <person name="Chang C.H."/>
            <person name="Lee J.M."/>
            <person name="Toriumi M.J."/>
            <person name="Chan M.M."/>
            <person name="Tang C.C."/>
            <person name="Onodera C.S."/>
            <person name="Deng J.M."/>
            <person name="Akiyama K."/>
            <person name="Ansari Y."/>
            <person name="Arakawa T."/>
            <person name="Banh J."/>
            <person name="Banno F."/>
            <person name="Bowser L."/>
            <person name="Brooks S.Y."/>
            <person name="Carninci P."/>
            <person name="Chao Q."/>
            <person name="Choy N."/>
            <person name="Enju A."/>
            <person name="Goldsmith A.D."/>
            <person name="Gurjal M."/>
            <person name="Hansen N.F."/>
            <person name="Hayashizaki Y."/>
            <person name="Johnson-Hopson C."/>
            <person name="Hsuan V.W."/>
            <person name="Iida K."/>
            <person name="Karnes M."/>
            <person name="Khan S."/>
            <person name="Koesema E."/>
            <person name="Ishida J."/>
            <person name="Jiang P.X."/>
            <person name="Jones T."/>
            <person name="Kawai J."/>
            <person name="Kamiya A."/>
            <person name="Meyers C."/>
            <person name="Nakajima M."/>
            <person name="Narusaka M."/>
            <person name="Seki M."/>
            <person name="Sakurai T."/>
            <person name="Satou M."/>
            <person name="Tamse R."/>
            <person name="Vaysberg M."/>
            <person name="Wallender E.K."/>
            <person name="Wong C."/>
            <person name="Yamamura Y."/>
            <person name="Yuan S."/>
            <person name="Shinozaki K."/>
            <person name="Davis R.W."/>
            <person name="Theologis A."/>
            <person name="Ecker J.R."/>
        </authorList>
    </citation>
    <scope>NUCLEOTIDE SEQUENCE [LARGE SCALE MRNA]</scope>
    <source>
        <strain>cv. Columbia</strain>
    </source>
</reference>
<reference key="4">
    <citation type="submission" date="2002-03" db="EMBL/GenBank/DDBJ databases">
        <title>Full-length cDNA from Arabidopsis thaliana.</title>
        <authorList>
            <person name="Brover V.V."/>
            <person name="Troukhan M.E."/>
            <person name="Alexandrov N.A."/>
            <person name="Lu Y.-P."/>
            <person name="Flavell R.B."/>
            <person name="Feldmann K.A."/>
        </authorList>
    </citation>
    <scope>NUCLEOTIDE SEQUENCE [LARGE SCALE MRNA]</scope>
</reference>
<reference key="5">
    <citation type="submission" date="2005-03" db="EMBL/GenBank/DDBJ databases">
        <title>Large-scale analysis of RIKEN Arabidopsis full-length (RAFL) cDNAs.</title>
        <authorList>
            <person name="Totoki Y."/>
            <person name="Seki M."/>
            <person name="Ishida J."/>
            <person name="Nakajima M."/>
            <person name="Enju A."/>
            <person name="Kamiya A."/>
            <person name="Narusaka M."/>
            <person name="Shin-i T."/>
            <person name="Nakagawa M."/>
            <person name="Sakamoto N."/>
            <person name="Oishi K."/>
            <person name="Kohara Y."/>
            <person name="Kobayashi M."/>
            <person name="Toyoda A."/>
            <person name="Sakaki Y."/>
            <person name="Sakurai T."/>
            <person name="Iida K."/>
            <person name="Akiyama K."/>
            <person name="Satou M."/>
            <person name="Toyoda T."/>
            <person name="Konagaya A."/>
            <person name="Carninci P."/>
            <person name="Kawai J."/>
            <person name="Hayashizaki Y."/>
            <person name="Shinozaki K."/>
        </authorList>
    </citation>
    <scope>NUCLEOTIDE SEQUENCE [LARGE SCALE MRNA] OF 173-362</scope>
    <source>
        <strain>cv. Columbia</strain>
    </source>
</reference>
<reference key="6">
    <citation type="journal article" date="2012" name="Mol. Cell. Proteomics">
        <title>Comparative large-scale characterisation of plant vs. mammal proteins reveals similar and idiosyncratic N-alpha acetylation features.</title>
        <authorList>
            <person name="Bienvenut W.V."/>
            <person name="Sumpton D."/>
            <person name="Martinez A."/>
            <person name="Lilla S."/>
            <person name="Espagne C."/>
            <person name="Meinnel T."/>
            <person name="Giglione C."/>
        </authorList>
    </citation>
    <scope>ACETYLATION [LARGE SCALE ANALYSIS] AT ALA-2</scope>
    <scope>CLEAVAGE OF INITIATOR METHIONINE [LARGE SCALE ANALYSIS]</scope>
    <scope>IDENTIFICATION BY MASS SPECTROMETRY [LARGE SCALE ANALYSIS]</scope>
</reference>
<reference key="7">
    <citation type="submission" date="2005-01" db="PDB data bank">
        <title>X-ray structure of gene product from Arabidopsis thaliana At4g09670.</title>
        <authorList>
            <consortium name="Center for eukaryotic structural genomics (CESG)"/>
        </authorList>
    </citation>
    <scope>X-RAY CRYSTALLOGRAPHY (2.49 ANGSTROMS) OF 2-362</scope>
    <scope>SUBUNIT</scope>
</reference>
<name>Y4967_ARATH</name>
<dbReference type="EC" id="1.-.-.-"/>
<dbReference type="EMBL" id="AL049482">
    <property type="protein sequence ID" value="CAB39634.1"/>
    <property type="molecule type" value="Genomic_DNA"/>
</dbReference>
<dbReference type="EMBL" id="AL161515">
    <property type="protein sequence ID" value="CAB78090.1"/>
    <property type="molecule type" value="Genomic_DNA"/>
</dbReference>
<dbReference type="EMBL" id="CP002687">
    <property type="protein sequence ID" value="AEE82779.1"/>
    <property type="molecule type" value="Genomic_DNA"/>
</dbReference>
<dbReference type="EMBL" id="BT002355">
    <property type="protein sequence ID" value="AAN86188.1"/>
    <property type="molecule type" value="mRNA"/>
</dbReference>
<dbReference type="EMBL" id="AY045851">
    <property type="protein sequence ID" value="AAK76525.2"/>
    <property type="molecule type" value="mRNA"/>
</dbReference>
<dbReference type="EMBL" id="AY085911">
    <property type="protein sequence ID" value="AAM63123.1"/>
    <property type="molecule type" value="mRNA"/>
</dbReference>
<dbReference type="EMBL" id="AK220867">
    <property type="protein sequence ID" value="BAD94240.1"/>
    <property type="molecule type" value="mRNA"/>
</dbReference>
<dbReference type="PIR" id="T04014">
    <property type="entry name" value="T04014"/>
</dbReference>
<dbReference type="RefSeq" id="NP_192705.1">
    <property type="nucleotide sequence ID" value="NM_117035.4"/>
</dbReference>
<dbReference type="PDB" id="1YDW">
    <property type="method" value="X-ray"/>
    <property type="resolution" value="2.49 A"/>
    <property type="chains" value="A/B=2-362"/>
</dbReference>
<dbReference type="PDB" id="2Q4E">
    <property type="method" value="X-ray"/>
    <property type="resolution" value="2.49 A"/>
    <property type="chains" value="A/B=2-362"/>
</dbReference>
<dbReference type="PDBsum" id="1YDW"/>
<dbReference type="PDBsum" id="2Q4E"/>
<dbReference type="SMR" id="Q9SZ83"/>
<dbReference type="FunCoup" id="Q9SZ83">
    <property type="interactions" value="1806"/>
</dbReference>
<dbReference type="STRING" id="3702.Q9SZ83"/>
<dbReference type="iPTMnet" id="Q9SZ83"/>
<dbReference type="PaxDb" id="3702-AT4G09670.1"/>
<dbReference type="ProteomicsDB" id="243006"/>
<dbReference type="DNASU" id="826553"/>
<dbReference type="EnsemblPlants" id="AT4G09670.1">
    <property type="protein sequence ID" value="AT4G09670.1"/>
    <property type="gene ID" value="AT4G09670"/>
</dbReference>
<dbReference type="GeneID" id="826553"/>
<dbReference type="Gramene" id="AT4G09670.1">
    <property type="protein sequence ID" value="AT4G09670.1"/>
    <property type="gene ID" value="AT4G09670"/>
</dbReference>
<dbReference type="KEGG" id="ath:AT4G09670"/>
<dbReference type="Araport" id="AT4G09670"/>
<dbReference type="TAIR" id="AT4G09670"/>
<dbReference type="eggNOG" id="KOG2741">
    <property type="taxonomic scope" value="Eukaryota"/>
</dbReference>
<dbReference type="HOGENOM" id="CLU_023194_5_3_1"/>
<dbReference type="InParanoid" id="Q9SZ83"/>
<dbReference type="OMA" id="HHARTHR"/>
<dbReference type="PhylomeDB" id="Q9SZ83"/>
<dbReference type="CD-CODE" id="4299E36E">
    <property type="entry name" value="Nucleolus"/>
</dbReference>
<dbReference type="EvolutionaryTrace" id="Q9SZ83"/>
<dbReference type="PRO" id="PR:Q9SZ83"/>
<dbReference type="Proteomes" id="UP000006548">
    <property type="component" value="Chromosome 4"/>
</dbReference>
<dbReference type="ExpressionAtlas" id="Q9SZ83">
    <property type="expression patterns" value="baseline and differential"/>
</dbReference>
<dbReference type="GO" id="GO:0005829">
    <property type="term" value="C:cytosol"/>
    <property type="evidence" value="ECO:0007005"/>
    <property type="project" value="TAIR"/>
</dbReference>
<dbReference type="GO" id="GO:0000166">
    <property type="term" value="F:nucleotide binding"/>
    <property type="evidence" value="ECO:0007669"/>
    <property type="project" value="InterPro"/>
</dbReference>
<dbReference type="GO" id="GO:0016491">
    <property type="term" value="F:oxidoreductase activity"/>
    <property type="evidence" value="ECO:0007669"/>
    <property type="project" value="UniProtKB-KW"/>
</dbReference>
<dbReference type="FunFam" id="3.30.360.10:FF:000063">
    <property type="entry name" value="Oxidoreductase family protein"/>
    <property type="match status" value="1"/>
</dbReference>
<dbReference type="Gene3D" id="3.30.360.10">
    <property type="entry name" value="Dihydrodipicolinate Reductase, domain 2"/>
    <property type="match status" value="1"/>
</dbReference>
<dbReference type="Gene3D" id="3.40.50.720">
    <property type="entry name" value="NAD(P)-binding Rossmann-like Domain"/>
    <property type="match status" value="1"/>
</dbReference>
<dbReference type="InterPro" id="IPR000683">
    <property type="entry name" value="Gfo/Idh/MocA-like_OxRdtase_N"/>
</dbReference>
<dbReference type="InterPro" id="IPR055170">
    <property type="entry name" value="GFO_IDH_MocA-like_dom"/>
</dbReference>
<dbReference type="InterPro" id="IPR036291">
    <property type="entry name" value="NAD(P)-bd_dom_sf"/>
</dbReference>
<dbReference type="PANTHER" id="PTHR46368">
    <property type="match status" value="1"/>
</dbReference>
<dbReference type="PANTHER" id="PTHR46368:SF19">
    <property type="entry name" value="GFO_IDH_MOCA-LIKE OXIDOREDUCTASE N-TERMINAL DOMAIN-CONTAINING PROTEIN"/>
    <property type="match status" value="1"/>
</dbReference>
<dbReference type="Pfam" id="PF01408">
    <property type="entry name" value="GFO_IDH_MocA"/>
    <property type="match status" value="1"/>
</dbReference>
<dbReference type="Pfam" id="PF22725">
    <property type="entry name" value="GFO_IDH_MocA_C3"/>
    <property type="match status" value="1"/>
</dbReference>
<dbReference type="SUPFAM" id="SSF55347">
    <property type="entry name" value="Glyceraldehyde-3-phosphate dehydrogenase-like, C-terminal domain"/>
    <property type="match status" value="1"/>
</dbReference>
<dbReference type="SUPFAM" id="SSF51735">
    <property type="entry name" value="NAD(P)-binding Rossmann-fold domains"/>
    <property type="match status" value="1"/>
</dbReference>
<accession>Q9SZ83</accession>
<accession>Q56ZU4</accession>
<accession>Q94AR5</accession>
<proteinExistence type="evidence at protein level"/>
<organism>
    <name type="scientific">Arabidopsis thaliana</name>
    <name type="common">Mouse-ear cress</name>
    <dbReference type="NCBI Taxonomy" id="3702"/>
    <lineage>
        <taxon>Eukaryota</taxon>
        <taxon>Viridiplantae</taxon>
        <taxon>Streptophyta</taxon>
        <taxon>Embryophyta</taxon>
        <taxon>Tracheophyta</taxon>
        <taxon>Spermatophyta</taxon>
        <taxon>Magnoliopsida</taxon>
        <taxon>eudicotyledons</taxon>
        <taxon>Gunneridae</taxon>
        <taxon>Pentapetalae</taxon>
        <taxon>rosids</taxon>
        <taxon>malvids</taxon>
        <taxon>Brassicales</taxon>
        <taxon>Brassicaceae</taxon>
        <taxon>Camelineae</taxon>
        <taxon>Arabidopsis</taxon>
    </lineage>
</organism>
<comment type="subunit">
    <text evidence="1">Homodimer.</text>
</comment>
<comment type="similarity">
    <text evidence="1">Belongs to the Gfo/Idh/MocA family.</text>
</comment>
<sequence>MATETQIRIGVMGCADIARKVSRAIHLAPNATISGVASRSLEKAKAFATANNYPESTKIHGSYESLLEDPEIDALYVPLPTSLHVEWAIKAAEKGKHILLEKPVAMNVTEFDKIVDACEANGVQIMDGTMWVHNPRTALLKEFLSDSERFGQLKTVQSCFSFAGDEDFLKNDIRVKPGLDGLGALGDAGWYAIRATLLANNFELPKTVTAFPGAVLNEAGVILSCGASLSWEDGRTATIYCSFLANLTMEITAIGTKGTLRVHDFIIPYKETEASFTTSTKAWFNDLVTAWVSPPSEHTVKTELPQEACMVREFARLVGEIKNNGAKPDGYWPSISRKTQLVVDAVKESVDKNYQQISLSGR</sequence>
<evidence type="ECO:0000305" key="1"/>
<evidence type="ECO:0007744" key="2">
    <source>
    </source>
</evidence>
<evidence type="ECO:0007829" key="3">
    <source>
        <dbReference type="PDB" id="1YDW"/>
    </source>
</evidence>
<evidence type="ECO:0007829" key="4">
    <source>
        <dbReference type="PDB" id="2Q4E"/>
    </source>
</evidence>
<protein>
    <recommendedName>
        <fullName>Uncharacterized oxidoreductase At4g09670</fullName>
        <ecNumber>1.-.-.-</ecNumber>
    </recommendedName>
</protein>
<feature type="initiator methionine" description="Removed" evidence="2">
    <location>
        <position position="1"/>
    </location>
</feature>
<feature type="chain" id="PRO_0000091788" description="Uncharacterized oxidoreductase At4g09670">
    <location>
        <begin position="2"/>
        <end position="362"/>
    </location>
</feature>
<feature type="modified residue" description="N-acetylalanine" evidence="2">
    <location>
        <position position="2"/>
    </location>
</feature>
<feature type="sequence conflict" description="In Ref. 5; BAD94240." evidence="1" ref="5">
    <original>I</original>
    <variation>M</variation>
    <location>
        <position position="173"/>
    </location>
</feature>
<feature type="strand" evidence="3">
    <location>
        <begin position="7"/>
        <end position="13"/>
    </location>
</feature>
<feature type="helix" evidence="3">
    <location>
        <begin position="18"/>
        <end position="27"/>
    </location>
</feature>
<feature type="strand" evidence="3">
    <location>
        <begin position="31"/>
        <end position="37"/>
    </location>
</feature>
<feature type="helix" evidence="3">
    <location>
        <begin position="41"/>
        <end position="50"/>
    </location>
</feature>
<feature type="strand" evidence="3">
    <location>
        <begin position="58"/>
        <end position="62"/>
    </location>
</feature>
<feature type="helix" evidence="3">
    <location>
        <begin position="63"/>
        <end position="68"/>
    </location>
</feature>
<feature type="strand" evidence="3">
    <location>
        <begin position="74"/>
        <end position="77"/>
    </location>
</feature>
<feature type="helix" evidence="3">
    <location>
        <begin position="81"/>
        <end position="83"/>
    </location>
</feature>
<feature type="helix" evidence="3">
    <location>
        <begin position="84"/>
        <end position="92"/>
    </location>
</feature>
<feature type="turn" evidence="3">
    <location>
        <begin position="93"/>
        <end position="95"/>
    </location>
</feature>
<feature type="strand" evidence="3">
    <location>
        <begin position="97"/>
        <end position="100"/>
    </location>
</feature>
<feature type="strand" evidence="3">
    <location>
        <begin position="105"/>
        <end position="107"/>
    </location>
</feature>
<feature type="helix" evidence="3">
    <location>
        <begin position="108"/>
        <end position="119"/>
    </location>
</feature>
<feature type="turn" evidence="3">
    <location>
        <begin position="120"/>
        <end position="122"/>
    </location>
</feature>
<feature type="strand" evidence="3">
    <location>
        <begin position="125"/>
        <end position="127"/>
    </location>
</feature>
<feature type="helix" evidence="3">
    <location>
        <begin position="131"/>
        <end position="133"/>
    </location>
</feature>
<feature type="helix" evidence="3">
    <location>
        <begin position="135"/>
        <end position="137"/>
    </location>
</feature>
<feature type="turn" evidence="3">
    <location>
        <begin position="138"/>
        <end position="142"/>
    </location>
</feature>
<feature type="helix" evidence="3">
    <location>
        <begin position="143"/>
        <end position="145"/>
    </location>
</feature>
<feature type="turn" evidence="3">
    <location>
        <begin position="147"/>
        <end position="150"/>
    </location>
</feature>
<feature type="strand" evidence="3">
    <location>
        <begin position="152"/>
        <end position="163"/>
    </location>
</feature>
<feature type="helix" evidence="3">
    <location>
        <begin position="166"/>
        <end position="171"/>
    </location>
</feature>
<feature type="helix" evidence="3">
    <location>
        <begin position="173"/>
        <end position="175"/>
    </location>
</feature>
<feature type="helix" evidence="3">
    <location>
        <begin position="183"/>
        <end position="187"/>
    </location>
</feature>
<feature type="helix" evidence="3">
    <location>
        <begin position="189"/>
        <end position="199"/>
    </location>
</feature>
<feature type="turn" evidence="3">
    <location>
        <begin position="200"/>
        <end position="202"/>
    </location>
</feature>
<feature type="strand" evidence="3">
    <location>
        <begin position="206"/>
        <end position="210"/>
    </location>
</feature>
<feature type="strand" evidence="3">
    <location>
        <begin position="222"/>
        <end position="230"/>
    </location>
</feature>
<feature type="strand" evidence="3">
    <location>
        <begin position="232"/>
        <end position="234"/>
    </location>
</feature>
<feature type="strand" evidence="3">
    <location>
        <begin position="236"/>
        <end position="264"/>
    </location>
</feature>
<feature type="strand" evidence="3">
    <location>
        <begin position="273"/>
        <end position="281"/>
    </location>
</feature>
<feature type="strand" evidence="3">
    <location>
        <begin position="288"/>
        <end position="293"/>
    </location>
</feature>
<feature type="strand" evidence="3">
    <location>
        <begin position="296"/>
        <end position="301"/>
    </location>
</feature>
<feature type="helix" evidence="3">
    <location>
        <begin position="306"/>
        <end position="314"/>
    </location>
</feature>
<feature type="turn" evidence="4">
    <location>
        <begin position="322"/>
        <end position="324"/>
    </location>
</feature>
<feature type="helix" evidence="3">
    <location>
        <begin position="332"/>
        <end position="351"/>
    </location>
</feature>
<feature type="turn" evidence="3">
    <location>
        <begin position="352"/>
        <end position="354"/>
    </location>
</feature>
<gene>
    <name type="ordered locus">At4g09670</name>
    <name type="ORF">F17A8.20</name>
</gene>
<keyword id="KW-0002">3D-structure</keyword>
<keyword id="KW-0007">Acetylation</keyword>
<keyword id="KW-0560">Oxidoreductase</keyword>
<keyword id="KW-1185">Reference proteome</keyword>